<evidence type="ECO:0000269" key="1">
    <source>
    </source>
</evidence>
<evidence type="ECO:0000305" key="2"/>
<accession>C0QYX7</accession>
<accession>C4MGG2</accession>
<gene>
    <name type="ordered locus">BHWA1_00569</name>
</gene>
<protein>
    <recommendedName>
        <fullName>Uncharacterized protein BHWA1_00569</fullName>
    </recommendedName>
    <alternativeName>
        <fullName>H-34</fullName>
    </alternativeName>
</protein>
<sequence>MNSIYAFANQNIIRVQLTDVKAPYTINIKGPYKAYNYKYESEIISALTNETVMVVENRLGLKVNEVGVYKEGIVFETQDGFTLNGIEYYGSLMFIPYNDTMIVVNELNIEDYVKGVLPHEMSPDWPMEALKAQAVAARTYAMYHILKNANKLPFDVDNTTKYQVYNGKEKMNWSVEQAVDRTRYEIAVYKGKVIATYFSALCGGHTDSAENVFGVAVPYLGGVACPYCNAQIKPWTNALSYNELNNDLANYSVHATEKSSIGISTDPKSGKATNIKIDNNDITSRDFRTTLSPRLVPSLNFTIKKVDNGIIITGKGSGHGVGMCQWGAYGMAQVKKDYKEILKFYYNGVDIVDYNRVNKEFEPDVWGN</sequence>
<name>Y0569_BRAHW</name>
<proteinExistence type="evidence at protein level"/>
<reference key="1">
    <citation type="journal article" date="2009" name="Vet. Microbiol.">
        <title>A reverse vaccinology approach to swine dysentery vaccine development.</title>
        <authorList>
            <person name="Song Y."/>
            <person name="La T."/>
            <person name="Phillips N.D."/>
            <person name="Bellgard M.I."/>
            <person name="Hampson D.J."/>
        </authorList>
    </citation>
    <scope>NUCLEOTIDE SEQUENCE [GENOMIC DNA]</scope>
    <scope>BIOTECHNOLOGY</scope>
</reference>
<reference key="2">
    <citation type="journal article" date="2009" name="PLoS ONE">
        <title>Genome sequence of the pathogenic intestinal spirochete Brachyspira hyodysenteriae reveals adaptations to its lifestyle in the porcine large intestine.</title>
        <authorList>
            <person name="Bellgard M.I."/>
            <person name="Wanchanthuek P."/>
            <person name="La T."/>
            <person name="Ryan K."/>
            <person name="Moolhuijzen P."/>
            <person name="Albertyn Z."/>
            <person name="Shaban B."/>
            <person name="Motro Y."/>
            <person name="Dunn D.S."/>
            <person name="Schibeci D."/>
            <person name="Hunter A."/>
            <person name="Barrero R."/>
            <person name="Phillips N.D."/>
            <person name="Hampson D.J."/>
        </authorList>
    </citation>
    <scope>NUCLEOTIDE SEQUENCE [LARGE SCALE GENOMIC DNA]</scope>
    <source>
        <strain>ATCC 49526 / WA1</strain>
    </source>
</reference>
<feature type="chain" id="PRO_0000380705" description="Uncharacterized protein BHWA1_00569">
    <location>
        <begin position="1"/>
        <end position="368"/>
    </location>
</feature>
<organism>
    <name type="scientific">Brachyspira hyodysenteriae (strain ATCC 49526 / WA1)</name>
    <dbReference type="NCBI Taxonomy" id="565034"/>
    <lineage>
        <taxon>Bacteria</taxon>
        <taxon>Pseudomonadati</taxon>
        <taxon>Spirochaetota</taxon>
        <taxon>Spirochaetia</taxon>
        <taxon>Brachyspirales</taxon>
        <taxon>Brachyspiraceae</taxon>
        <taxon>Brachyspira</taxon>
    </lineage>
</organism>
<comment type="function">
    <text>Might be involved in sporulation.</text>
</comment>
<comment type="biotechnology">
    <text evidence="1">Has shown promise in a 4-component vaccine with BHWA1_00430 (AC C0QY54), SecA (AC C0QZS7) and FlaAL (AC C0QWY9).</text>
</comment>
<comment type="sequence caution" evidence="2">
    <conflict type="erroneous initiation">
        <sequence resource="EMBL-CDS" id="ACD74836"/>
    </conflict>
</comment>
<dbReference type="EMBL" id="EU555166">
    <property type="protein sequence ID" value="ACD74836.1"/>
    <property type="status" value="ALT_INIT"/>
    <property type="molecule type" value="Genomic_DNA"/>
</dbReference>
<dbReference type="EMBL" id="CP001357">
    <property type="protein sequence ID" value="ACN83065.1"/>
    <property type="molecule type" value="Genomic_DNA"/>
</dbReference>
<dbReference type="RefSeq" id="WP_012670116.1">
    <property type="nucleotide sequence ID" value="NC_012225.1"/>
</dbReference>
<dbReference type="SMR" id="C0QYX7"/>
<dbReference type="STRING" id="565034.BHWA1_00569"/>
<dbReference type="GeneID" id="63961689"/>
<dbReference type="KEGG" id="bhy:BHWA1_00569"/>
<dbReference type="eggNOG" id="COG2385">
    <property type="taxonomic scope" value="Bacteria"/>
</dbReference>
<dbReference type="HOGENOM" id="CLU_021203_3_3_12"/>
<dbReference type="Proteomes" id="UP000001803">
    <property type="component" value="Chromosome"/>
</dbReference>
<dbReference type="GO" id="GO:0030288">
    <property type="term" value="C:outer membrane-bounded periplasmic space"/>
    <property type="evidence" value="ECO:0007669"/>
    <property type="project" value="TreeGrafter"/>
</dbReference>
<dbReference type="GO" id="GO:0030435">
    <property type="term" value="P:sporulation resulting in formation of a cellular spore"/>
    <property type="evidence" value="ECO:0007669"/>
    <property type="project" value="InterPro"/>
</dbReference>
<dbReference type="InterPro" id="IPR051922">
    <property type="entry name" value="Bact_Sporulation_Assoc"/>
</dbReference>
<dbReference type="InterPro" id="IPR013486">
    <property type="entry name" value="SpoIID/LytB"/>
</dbReference>
<dbReference type="InterPro" id="IPR013693">
    <property type="entry name" value="SpoIID/LytB_N"/>
</dbReference>
<dbReference type="NCBIfam" id="TIGR02669">
    <property type="entry name" value="SpoIID_LytB"/>
    <property type="match status" value="1"/>
</dbReference>
<dbReference type="PANTHER" id="PTHR30032:SF4">
    <property type="entry name" value="AMIDASE ENHANCER"/>
    <property type="match status" value="1"/>
</dbReference>
<dbReference type="PANTHER" id="PTHR30032">
    <property type="entry name" value="N-ACETYLMURAMOYL-L-ALANINE AMIDASE-RELATED"/>
    <property type="match status" value="1"/>
</dbReference>
<dbReference type="Pfam" id="PF08486">
    <property type="entry name" value="SpoIID"/>
    <property type="match status" value="1"/>
</dbReference>